<organism>
    <name type="scientific">Macaca fascicularis</name>
    <name type="common">Crab-eating macaque</name>
    <name type="synonym">Cynomolgus monkey</name>
    <dbReference type="NCBI Taxonomy" id="9541"/>
    <lineage>
        <taxon>Eukaryota</taxon>
        <taxon>Metazoa</taxon>
        <taxon>Chordata</taxon>
        <taxon>Craniata</taxon>
        <taxon>Vertebrata</taxon>
        <taxon>Euteleostomi</taxon>
        <taxon>Mammalia</taxon>
        <taxon>Eutheria</taxon>
        <taxon>Euarchontoglires</taxon>
        <taxon>Primates</taxon>
        <taxon>Haplorrhini</taxon>
        <taxon>Catarrhini</taxon>
        <taxon>Cercopithecidae</taxon>
        <taxon>Cercopithecinae</taxon>
        <taxon>Macaca</taxon>
    </lineage>
</organism>
<dbReference type="EMBL" id="AB168326">
    <property type="protein sequence ID" value="BAE00450.1"/>
    <property type="molecule type" value="mRNA"/>
</dbReference>
<dbReference type="RefSeq" id="NP_001270982.1">
    <property type="nucleotide sequence ID" value="NM_001284053.1"/>
</dbReference>
<dbReference type="SMR" id="Q4R8X1"/>
<dbReference type="STRING" id="9541.ENSMFAP00000037251"/>
<dbReference type="GlyCosmos" id="Q4R8X1">
    <property type="glycosylation" value="1 site, No reported glycans"/>
</dbReference>
<dbReference type="eggNOG" id="KOG2667">
    <property type="taxonomic scope" value="Eukaryota"/>
</dbReference>
<dbReference type="Proteomes" id="UP000233100">
    <property type="component" value="Unplaced"/>
</dbReference>
<dbReference type="GO" id="GO:0030134">
    <property type="term" value="C:COPII-coated ER to Golgi transport vesicle"/>
    <property type="evidence" value="ECO:0007669"/>
    <property type="project" value="TreeGrafter"/>
</dbReference>
<dbReference type="GO" id="GO:0005789">
    <property type="term" value="C:endoplasmic reticulum membrane"/>
    <property type="evidence" value="ECO:0007669"/>
    <property type="project" value="UniProtKB-SubCell"/>
</dbReference>
<dbReference type="GO" id="GO:0033116">
    <property type="term" value="C:endoplasmic reticulum-Golgi intermediate compartment membrane"/>
    <property type="evidence" value="ECO:0007669"/>
    <property type="project" value="UniProtKB-SubCell"/>
</dbReference>
<dbReference type="GO" id="GO:0000139">
    <property type="term" value="C:Golgi membrane"/>
    <property type="evidence" value="ECO:0007669"/>
    <property type="project" value="TreeGrafter"/>
</dbReference>
<dbReference type="GO" id="GO:0006888">
    <property type="term" value="P:endoplasmic reticulum to Golgi vesicle-mediated transport"/>
    <property type="evidence" value="ECO:0007669"/>
    <property type="project" value="TreeGrafter"/>
</dbReference>
<dbReference type="GO" id="GO:0006890">
    <property type="term" value="P:retrograde vesicle-mediated transport, Golgi to endoplasmic reticulum"/>
    <property type="evidence" value="ECO:0007669"/>
    <property type="project" value="TreeGrafter"/>
</dbReference>
<dbReference type="InterPro" id="IPR045888">
    <property type="entry name" value="Erv"/>
</dbReference>
<dbReference type="InterPro" id="IPR012936">
    <property type="entry name" value="Erv_C"/>
</dbReference>
<dbReference type="InterPro" id="IPR039542">
    <property type="entry name" value="Erv_N"/>
</dbReference>
<dbReference type="PANTHER" id="PTHR10984">
    <property type="entry name" value="ENDOPLASMIC RETICULUM-GOLGI INTERMEDIATE COMPARTMENT PROTEIN"/>
    <property type="match status" value="1"/>
</dbReference>
<dbReference type="PANTHER" id="PTHR10984:SF25">
    <property type="entry name" value="ENDOPLASMIC RETICULUM-GOLGI INTERMEDIATE COMPARTMENT PROTEIN 3"/>
    <property type="match status" value="1"/>
</dbReference>
<dbReference type="Pfam" id="PF07970">
    <property type="entry name" value="COPIIcoated_ERV"/>
    <property type="match status" value="1"/>
</dbReference>
<dbReference type="Pfam" id="PF13850">
    <property type="entry name" value="ERGIC_N"/>
    <property type="match status" value="1"/>
</dbReference>
<name>ERGI3_MACFA</name>
<protein>
    <recommendedName>
        <fullName>Endoplasmic reticulum-Golgi intermediate compartment protein 3</fullName>
    </recommendedName>
</protein>
<feature type="chain" id="PRO_0000239388" description="Endoplasmic reticulum-Golgi intermediate compartment protein 3">
    <location>
        <begin position="1"/>
        <end position="382"/>
    </location>
</feature>
<feature type="topological domain" description="Cytoplasmic" evidence="3">
    <location>
        <begin position="1"/>
        <end position="25"/>
    </location>
</feature>
<feature type="transmembrane region" description="Helical" evidence="3">
    <location>
        <begin position="26"/>
        <end position="46"/>
    </location>
</feature>
<feature type="topological domain" description="Lumenal" evidence="3">
    <location>
        <begin position="47"/>
        <end position="340"/>
    </location>
</feature>
<feature type="transmembrane region" description="Helical" evidence="3">
    <location>
        <begin position="341"/>
        <end position="361"/>
    </location>
</feature>
<feature type="topological domain" description="Cytoplasmic" evidence="3">
    <location>
        <begin position="362"/>
        <end position="382"/>
    </location>
</feature>
<feature type="region of interest" description="Required for MARCHF2-mediated degradation" evidence="2">
    <location>
        <begin position="1"/>
        <end position="25"/>
    </location>
</feature>
<feature type="site" description="Ubiquitinated; by MARCHF2" evidence="2">
    <location>
        <position position="8"/>
    </location>
</feature>
<feature type="modified residue" description="N-acetylmethionine" evidence="2">
    <location>
        <position position="1"/>
    </location>
</feature>
<feature type="modified residue" description="Phosphoserine" evidence="2">
    <location>
        <position position="116"/>
    </location>
</feature>
<feature type="glycosylation site" description="N-linked (GlcNAc...) asparagine" evidence="3">
    <location>
        <position position="265"/>
    </location>
</feature>
<gene>
    <name type="primary">ERGIC3</name>
    <name type="ORF">QtsA-11239</name>
</gene>
<keyword id="KW-0007">Acetylation</keyword>
<keyword id="KW-0256">Endoplasmic reticulum</keyword>
<keyword id="KW-0931">ER-Golgi transport</keyword>
<keyword id="KW-0325">Glycoprotein</keyword>
<keyword id="KW-0333">Golgi apparatus</keyword>
<keyword id="KW-0472">Membrane</keyword>
<keyword id="KW-0597">Phosphoprotein</keyword>
<keyword id="KW-1185">Reference proteome</keyword>
<keyword id="KW-0812">Transmembrane</keyword>
<keyword id="KW-1133">Transmembrane helix</keyword>
<keyword id="KW-0813">Transport</keyword>
<reference key="1">
    <citation type="submission" date="2004-03" db="EMBL/GenBank/DDBJ databases">
        <title>DNA sequences of macaque genes expressed in brain or testis and its evolutionary implications.</title>
        <authorList>
            <consortium name="International consortium for macaque cDNA sequencing and analysis"/>
        </authorList>
    </citation>
    <scope>NUCLEOTIDE SEQUENCE [LARGE SCALE MRNA]</scope>
    <source>
        <tissue>Testis</tissue>
    </source>
</reference>
<proteinExistence type="evidence at transcript level"/>
<sequence>MEALGKLKQFDAYPKTLEDFRVKTCGGATVTIVSGLLMLLLFLSELQYYLTTEVHPELYVDKSRGDKLKINIDVLFPHMPCAYLSIDAMDVAGEQQLDVEHNLFKQRLDKDGTPVSSEAERHELGKVEVTVFGPDSLDPDRCESCYGAEAEDIKCCNTCEDVREAYRRRGAFKNPDTIEQCRREGFSQKMQEQKNEGCQVYGFLEVNKVAGNFHFAPGKSFQQSHVHVHDLQSFGLDNINMTHYIQHLSFGEDYPGIVNPLDHTNVTAPQASMMFQYFVKVVPTVYMKVDGEVLRTNQFSVTRHEKVANGLLGDQGLPGVFVLYELSPMMVKLTEKHRSFTHFLTGVCAIIGGMFTVAGLIDSLIYHSARAIQKKIDLGKTT</sequence>
<evidence type="ECO:0000250" key="1"/>
<evidence type="ECO:0000250" key="2">
    <source>
        <dbReference type="UniProtKB" id="Q9Y282"/>
    </source>
</evidence>
<evidence type="ECO:0000255" key="3"/>
<evidence type="ECO:0000305" key="4"/>
<accession>Q4R8X1</accession>
<comment type="function">
    <text evidence="2">Possible role in transport between endoplasmic reticulum and Golgi. Positively regulates trafficking of the secretory proteins alpha1-antitrypsin/SERPINA1 and HP/haptoglobin (By similarity).</text>
</comment>
<comment type="subunit">
    <text evidence="2">Forms homodimers (By similarity). May form a heteromeric complex composed of ERGIC1, ERGIC2 and ERGIC3 (By similarity). Within the complex, the interaction with ERGIC1 is direct (By similarity). Interacts with ERGIC1/ERGIC32 (By similarity). Interacts with ERGIC2, the interaction is required for the stable expression of both proteins (By similarity). Interacts with MARCHF2 (By similarity). Interacts with SERPINA1/alpha1-antitrypsin and HP/haptoglobin (By similarity).</text>
</comment>
<comment type="subcellular location">
    <subcellularLocation>
        <location evidence="1">Endoplasmic reticulum-Golgi intermediate compartment membrane</location>
        <topology evidence="1">Multi-pass membrane protein</topology>
    </subcellularLocation>
    <subcellularLocation>
        <location evidence="1">Golgi apparatus</location>
        <location evidence="1">cis-Golgi network membrane</location>
        <topology evidence="1">Multi-pass membrane protein</topology>
    </subcellularLocation>
    <subcellularLocation>
        <location evidence="1">Endoplasmic reticulum membrane</location>
        <topology evidence="1">Multi-pass membrane protein</topology>
    </subcellularLocation>
    <text evidence="1">Cycles between the endoplasmic reticulum and the Golgi.</text>
</comment>
<comment type="similarity">
    <text evidence="4">Belongs to the ERGIC family.</text>
</comment>